<sequence>MILGIGTDLCDIRRIESSLERFGDRFTHRVFTDGERGKCDRRAARGPSYARRFAAKEACAKALGTGMSQGVFWRDMEVVNLPSGQPTLNLTGGAREHLARMVPAGHEARLHLTLTDEPPLAQAFVIIEAVPITATS</sequence>
<evidence type="ECO:0000255" key="1">
    <source>
        <dbReference type="HAMAP-Rule" id="MF_00101"/>
    </source>
</evidence>
<keyword id="KW-0963">Cytoplasm</keyword>
<keyword id="KW-0275">Fatty acid biosynthesis</keyword>
<keyword id="KW-0276">Fatty acid metabolism</keyword>
<keyword id="KW-0444">Lipid biosynthesis</keyword>
<keyword id="KW-0443">Lipid metabolism</keyword>
<keyword id="KW-0460">Magnesium</keyword>
<keyword id="KW-0479">Metal-binding</keyword>
<keyword id="KW-0808">Transferase</keyword>
<organism>
    <name type="scientific">Methylorubrum extorquens (strain CM4 / NCIMB 13688)</name>
    <name type="common">Methylobacterium extorquens</name>
    <dbReference type="NCBI Taxonomy" id="440085"/>
    <lineage>
        <taxon>Bacteria</taxon>
        <taxon>Pseudomonadati</taxon>
        <taxon>Pseudomonadota</taxon>
        <taxon>Alphaproteobacteria</taxon>
        <taxon>Hyphomicrobiales</taxon>
        <taxon>Methylobacteriaceae</taxon>
        <taxon>Methylorubrum</taxon>
    </lineage>
</organism>
<name>ACPS_METC4</name>
<dbReference type="EC" id="2.7.8.7" evidence="1"/>
<dbReference type="EMBL" id="CP001298">
    <property type="protein sequence ID" value="ACK83389.1"/>
    <property type="molecule type" value="Genomic_DNA"/>
</dbReference>
<dbReference type="RefSeq" id="WP_015822743.1">
    <property type="nucleotide sequence ID" value="NC_011757.1"/>
</dbReference>
<dbReference type="SMR" id="B7L2A4"/>
<dbReference type="GeneID" id="72989958"/>
<dbReference type="KEGG" id="mch:Mchl_2547"/>
<dbReference type="HOGENOM" id="CLU_089696_0_2_5"/>
<dbReference type="Proteomes" id="UP000002385">
    <property type="component" value="Chromosome"/>
</dbReference>
<dbReference type="GO" id="GO:0005737">
    <property type="term" value="C:cytoplasm"/>
    <property type="evidence" value="ECO:0007669"/>
    <property type="project" value="UniProtKB-SubCell"/>
</dbReference>
<dbReference type="GO" id="GO:0008897">
    <property type="term" value="F:holo-[acyl-carrier-protein] synthase activity"/>
    <property type="evidence" value="ECO:0007669"/>
    <property type="project" value="UniProtKB-UniRule"/>
</dbReference>
<dbReference type="GO" id="GO:0000287">
    <property type="term" value="F:magnesium ion binding"/>
    <property type="evidence" value="ECO:0007669"/>
    <property type="project" value="UniProtKB-UniRule"/>
</dbReference>
<dbReference type="GO" id="GO:0006633">
    <property type="term" value="P:fatty acid biosynthetic process"/>
    <property type="evidence" value="ECO:0007669"/>
    <property type="project" value="UniProtKB-UniRule"/>
</dbReference>
<dbReference type="Gene3D" id="3.90.470.20">
    <property type="entry name" value="4'-phosphopantetheinyl transferase domain"/>
    <property type="match status" value="1"/>
</dbReference>
<dbReference type="HAMAP" id="MF_00101">
    <property type="entry name" value="AcpS"/>
    <property type="match status" value="1"/>
</dbReference>
<dbReference type="InterPro" id="IPR008278">
    <property type="entry name" value="4-PPantetheinyl_Trfase_dom"/>
</dbReference>
<dbReference type="InterPro" id="IPR037143">
    <property type="entry name" value="4-PPantetheinyl_Trfase_dom_sf"/>
</dbReference>
<dbReference type="InterPro" id="IPR002582">
    <property type="entry name" value="ACPS"/>
</dbReference>
<dbReference type="InterPro" id="IPR004568">
    <property type="entry name" value="Ppantetheine-prot_Trfase_dom"/>
</dbReference>
<dbReference type="NCBIfam" id="TIGR00516">
    <property type="entry name" value="acpS"/>
    <property type="match status" value="1"/>
</dbReference>
<dbReference type="NCBIfam" id="TIGR00556">
    <property type="entry name" value="pantethn_trn"/>
    <property type="match status" value="1"/>
</dbReference>
<dbReference type="Pfam" id="PF01648">
    <property type="entry name" value="ACPS"/>
    <property type="match status" value="1"/>
</dbReference>
<dbReference type="SUPFAM" id="SSF56214">
    <property type="entry name" value="4'-phosphopantetheinyl transferase"/>
    <property type="match status" value="1"/>
</dbReference>
<comment type="function">
    <text evidence="1">Transfers the 4'-phosphopantetheine moiety from coenzyme A to a Ser of acyl-carrier-protein.</text>
</comment>
<comment type="catalytic activity">
    <reaction evidence="1">
        <text>apo-[ACP] + CoA = holo-[ACP] + adenosine 3',5'-bisphosphate + H(+)</text>
        <dbReference type="Rhea" id="RHEA:12068"/>
        <dbReference type="Rhea" id="RHEA-COMP:9685"/>
        <dbReference type="Rhea" id="RHEA-COMP:9690"/>
        <dbReference type="ChEBI" id="CHEBI:15378"/>
        <dbReference type="ChEBI" id="CHEBI:29999"/>
        <dbReference type="ChEBI" id="CHEBI:57287"/>
        <dbReference type="ChEBI" id="CHEBI:58343"/>
        <dbReference type="ChEBI" id="CHEBI:64479"/>
        <dbReference type="EC" id="2.7.8.7"/>
    </reaction>
</comment>
<comment type="cofactor">
    <cofactor evidence="1">
        <name>Mg(2+)</name>
        <dbReference type="ChEBI" id="CHEBI:18420"/>
    </cofactor>
</comment>
<comment type="subcellular location">
    <subcellularLocation>
        <location evidence="1">Cytoplasm</location>
    </subcellularLocation>
</comment>
<comment type="similarity">
    <text evidence="1">Belongs to the P-Pant transferase superfamily. AcpS family.</text>
</comment>
<reference key="1">
    <citation type="submission" date="2008-12" db="EMBL/GenBank/DDBJ databases">
        <title>Complete sequence of chromosome of Methylobacterium chloromethanicum CM4.</title>
        <authorList>
            <consortium name="US DOE Joint Genome Institute"/>
            <person name="Lucas S."/>
            <person name="Copeland A."/>
            <person name="Lapidus A."/>
            <person name="Glavina del Rio T."/>
            <person name="Dalin E."/>
            <person name="Tice H."/>
            <person name="Bruce D."/>
            <person name="Goodwin L."/>
            <person name="Pitluck S."/>
            <person name="Chertkov O."/>
            <person name="Brettin T."/>
            <person name="Detter J.C."/>
            <person name="Han C."/>
            <person name="Larimer F."/>
            <person name="Land M."/>
            <person name="Hauser L."/>
            <person name="Kyrpides N."/>
            <person name="Mikhailova N."/>
            <person name="Marx C."/>
            <person name="Richardson P."/>
        </authorList>
    </citation>
    <scope>NUCLEOTIDE SEQUENCE [LARGE SCALE GENOMIC DNA]</scope>
    <source>
        <strain>CM4 / NCIMB 13688</strain>
    </source>
</reference>
<accession>B7L2A4</accession>
<protein>
    <recommendedName>
        <fullName evidence="1">Holo-[acyl-carrier-protein] synthase</fullName>
        <shortName evidence="1">Holo-ACP synthase</shortName>
        <ecNumber evidence="1">2.7.8.7</ecNumber>
    </recommendedName>
    <alternativeName>
        <fullName evidence="1">4'-phosphopantetheinyl transferase AcpS</fullName>
    </alternativeName>
</protein>
<gene>
    <name evidence="1" type="primary">acpS</name>
    <name type="ordered locus">Mchl_2547</name>
</gene>
<proteinExistence type="inferred from homology"/>
<feature type="chain" id="PRO_1000118815" description="Holo-[acyl-carrier-protein] synthase">
    <location>
        <begin position="1"/>
        <end position="136"/>
    </location>
</feature>
<feature type="binding site" evidence="1">
    <location>
        <position position="8"/>
    </location>
    <ligand>
        <name>Mg(2+)</name>
        <dbReference type="ChEBI" id="CHEBI:18420"/>
    </ligand>
</feature>
<feature type="binding site" evidence="1">
    <location>
        <position position="57"/>
    </location>
    <ligand>
        <name>Mg(2+)</name>
        <dbReference type="ChEBI" id="CHEBI:18420"/>
    </ligand>
</feature>